<reference key="1">
    <citation type="journal article" date="2001" name="Proc. Natl. Acad. Sci. U.S.A.">
        <title>Analysis of the chromosome sequence of the legume symbiont Sinorhizobium meliloti strain 1021.</title>
        <authorList>
            <person name="Capela D."/>
            <person name="Barloy-Hubler F."/>
            <person name="Gouzy J."/>
            <person name="Bothe G."/>
            <person name="Ampe F."/>
            <person name="Batut J."/>
            <person name="Boistard P."/>
            <person name="Becker A."/>
            <person name="Boutry M."/>
            <person name="Cadieu E."/>
            <person name="Dreano S."/>
            <person name="Gloux S."/>
            <person name="Godrie T."/>
            <person name="Goffeau A."/>
            <person name="Kahn D."/>
            <person name="Kiss E."/>
            <person name="Lelaure V."/>
            <person name="Masuy D."/>
            <person name="Pohl T."/>
            <person name="Portetelle D."/>
            <person name="Puehler A."/>
            <person name="Purnelle B."/>
            <person name="Ramsperger U."/>
            <person name="Renard C."/>
            <person name="Thebault P."/>
            <person name="Vandenbol M."/>
            <person name="Weidner S."/>
            <person name="Galibert F."/>
        </authorList>
    </citation>
    <scope>NUCLEOTIDE SEQUENCE [LARGE SCALE GENOMIC DNA]</scope>
    <source>
        <strain>1021</strain>
    </source>
</reference>
<reference key="2">
    <citation type="journal article" date="2001" name="Science">
        <title>The composite genome of the legume symbiont Sinorhizobium meliloti.</title>
        <authorList>
            <person name="Galibert F."/>
            <person name="Finan T.M."/>
            <person name="Long S.R."/>
            <person name="Puehler A."/>
            <person name="Abola P."/>
            <person name="Ampe F."/>
            <person name="Barloy-Hubler F."/>
            <person name="Barnett M.J."/>
            <person name="Becker A."/>
            <person name="Boistard P."/>
            <person name="Bothe G."/>
            <person name="Boutry M."/>
            <person name="Bowser L."/>
            <person name="Buhrmester J."/>
            <person name="Cadieu E."/>
            <person name="Capela D."/>
            <person name="Chain P."/>
            <person name="Cowie A."/>
            <person name="Davis R.W."/>
            <person name="Dreano S."/>
            <person name="Federspiel N.A."/>
            <person name="Fisher R.F."/>
            <person name="Gloux S."/>
            <person name="Godrie T."/>
            <person name="Goffeau A."/>
            <person name="Golding B."/>
            <person name="Gouzy J."/>
            <person name="Gurjal M."/>
            <person name="Hernandez-Lucas I."/>
            <person name="Hong A."/>
            <person name="Huizar L."/>
            <person name="Hyman R.W."/>
            <person name="Jones T."/>
            <person name="Kahn D."/>
            <person name="Kahn M.L."/>
            <person name="Kalman S."/>
            <person name="Keating D.H."/>
            <person name="Kiss E."/>
            <person name="Komp C."/>
            <person name="Lelaure V."/>
            <person name="Masuy D."/>
            <person name="Palm C."/>
            <person name="Peck M.C."/>
            <person name="Pohl T.M."/>
            <person name="Portetelle D."/>
            <person name="Purnelle B."/>
            <person name="Ramsperger U."/>
            <person name="Surzycki R."/>
            <person name="Thebault P."/>
            <person name="Vandenbol M."/>
            <person name="Vorhoelter F.J."/>
            <person name="Weidner S."/>
            <person name="Wells D.H."/>
            <person name="Wong K."/>
            <person name="Yeh K.-C."/>
            <person name="Batut J."/>
        </authorList>
    </citation>
    <scope>NUCLEOTIDE SEQUENCE [LARGE SCALE GENOMIC DNA]</scope>
    <source>
        <strain>1021</strain>
    </source>
</reference>
<accession>Q92T25</accession>
<keyword id="KW-0312">Gluconeogenesis</keyword>
<keyword id="KW-0324">Glycolysis</keyword>
<keyword id="KW-0413">Isomerase</keyword>
<keyword id="KW-1185">Reference proteome</keyword>
<protein>
    <recommendedName>
        <fullName evidence="1">2,3-bisphosphoglycerate-dependent phosphoglycerate mutase</fullName>
        <shortName evidence="1">BPG-dependent PGAM</shortName>
        <shortName evidence="1">PGAM</shortName>
        <shortName evidence="1">Phosphoglyceromutase</shortName>
        <shortName evidence="1">dPGM</shortName>
        <ecNumber evidence="1">5.4.2.11</ecNumber>
    </recommendedName>
</protein>
<sequence>MSGTLVLVRHGQSDWNLKNLFTGWRDPDLTELGIEEAKAGGKALADYGIKFDIAFTSVLIRAQRTCQLVLDAVGQSSLETIRDQALNERDYGDLSGLNKDDARAKWGEEQVHIWRRSYDVPPPGGESLRDTGARVWPYYLTDILPRVLSGEKVLVAAHGNSLRSLVMVLDKLTKEQILKLNLATGVPMVYKLNADSTVASKEVLGDMSGAH</sequence>
<feature type="chain" id="PRO_0000179906" description="2,3-bisphosphoglycerate-dependent phosphoglycerate mutase">
    <location>
        <begin position="1"/>
        <end position="211"/>
    </location>
</feature>
<feature type="active site" description="Tele-phosphohistidine intermediate" evidence="1">
    <location>
        <position position="10"/>
    </location>
</feature>
<feature type="active site" description="Proton donor/acceptor" evidence="1">
    <location>
        <position position="88"/>
    </location>
</feature>
<feature type="binding site" evidence="1">
    <location>
        <begin position="9"/>
        <end position="16"/>
    </location>
    <ligand>
        <name>substrate</name>
    </ligand>
</feature>
<feature type="binding site" evidence="1">
    <location>
        <begin position="22"/>
        <end position="23"/>
    </location>
    <ligand>
        <name>substrate</name>
    </ligand>
</feature>
<feature type="binding site" evidence="1">
    <location>
        <position position="61"/>
    </location>
    <ligand>
        <name>substrate</name>
    </ligand>
</feature>
<feature type="binding site" evidence="1">
    <location>
        <begin position="88"/>
        <end position="91"/>
    </location>
    <ligand>
        <name>substrate</name>
    </ligand>
</feature>
<feature type="binding site" evidence="1">
    <location>
        <position position="99"/>
    </location>
    <ligand>
        <name>substrate</name>
    </ligand>
</feature>
<feature type="binding site" evidence="1">
    <location>
        <begin position="115"/>
        <end position="116"/>
    </location>
    <ligand>
        <name>substrate</name>
    </ligand>
</feature>
<feature type="binding site" evidence="1">
    <location>
        <begin position="159"/>
        <end position="160"/>
    </location>
    <ligand>
        <name>substrate</name>
    </ligand>
</feature>
<feature type="site" description="Transition state stabilizer" evidence="1">
    <location>
        <position position="158"/>
    </location>
</feature>
<organism>
    <name type="scientific">Rhizobium meliloti (strain 1021)</name>
    <name type="common">Ensifer meliloti</name>
    <name type="synonym">Sinorhizobium meliloti</name>
    <dbReference type="NCBI Taxonomy" id="266834"/>
    <lineage>
        <taxon>Bacteria</taxon>
        <taxon>Pseudomonadati</taxon>
        <taxon>Pseudomonadota</taxon>
        <taxon>Alphaproteobacteria</taxon>
        <taxon>Hyphomicrobiales</taxon>
        <taxon>Rhizobiaceae</taxon>
        <taxon>Sinorhizobium/Ensifer group</taxon>
        <taxon>Sinorhizobium</taxon>
    </lineage>
</organism>
<dbReference type="EC" id="5.4.2.11" evidence="1"/>
<dbReference type="EMBL" id="AL591688">
    <property type="protein sequence ID" value="CAC41549.1"/>
    <property type="molecule type" value="Genomic_DNA"/>
</dbReference>
<dbReference type="RefSeq" id="NP_384268.1">
    <property type="nucleotide sequence ID" value="NC_003047.1"/>
</dbReference>
<dbReference type="RefSeq" id="WP_003531941.1">
    <property type="nucleotide sequence ID" value="NC_003047.1"/>
</dbReference>
<dbReference type="SMR" id="Q92T25"/>
<dbReference type="EnsemblBacteria" id="CAC41549">
    <property type="protein sequence ID" value="CAC41549"/>
    <property type="gene ID" value="SMc02838"/>
</dbReference>
<dbReference type="KEGG" id="sme:SMc02838"/>
<dbReference type="PATRIC" id="fig|266834.11.peg.1523"/>
<dbReference type="eggNOG" id="COG0588">
    <property type="taxonomic scope" value="Bacteria"/>
</dbReference>
<dbReference type="HOGENOM" id="CLU_033323_1_4_5"/>
<dbReference type="OrthoDB" id="9781415at2"/>
<dbReference type="UniPathway" id="UPA00109">
    <property type="reaction ID" value="UER00186"/>
</dbReference>
<dbReference type="Proteomes" id="UP000001976">
    <property type="component" value="Chromosome"/>
</dbReference>
<dbReference type="GO" id="GO:0004619">
    <property type="term" value="F:phosphoglycerate mutase activity"/>
    <property type="evidence" value="ECO:0007669"/>
    <property type="project" value="UniProtKB-EC"/>
</dbReference>
<dbReference type="GO" id="GO:0006094">
    <property type="term" value="P:gluconeogenesis"/>
    <property type="evidence" value="ECO:0007669"/>
    <property type="project" value="UniProtKB-UniRule"/>
</dbReference>
<dbReference type="GO" id="GO:0006096">
    <property type="term" value="P:glycolytic process"/>
    <property type="evidence" value="ECO:0007669"/>
    <property type="project" value="UniProtKB-UniRule"/>
</dbReference>
<dbReference type="CDD" id="cd07067">
    <property type="entry name" value="HP_PGM_like"/>
    <property type="match status" value="1"/>
</dbReference>
<dbReference type="Gene3D" id="3.40.50.1240">
    <property type="entry name" value="Phosphoglycerate mutase-like"/>
    <property type="match status" value="1"/>
</dbReference>
<dbReference type="HAMAP" id="MF_01039">
    <property type="entry name" value="PGAM_GpmA"/>
    <property type="match status" value="1"/>
</dbReference>
<dbReference type="InterPro" id="IPR013078">
    <property type="entry name" value="His_Pase_superF_clade-1"/>
</dbReference>
<dbReference type="InterPro" id="IPR029033">
    <property type="entry name" value="His_PPase_superfam"/>
</dbReference>
<dbReference type="InterPro" id="IPR001345">
    <property type="entry name" value="PG/BPGM_mutase_AS"/>
</dbReference>
<dbReference type="InterPro" id="IPR005952">
    <property type="entry name" value="Phosphogly_mut1"/>
</dbReference>
<dbReference type="NCBIfam" id="TIGR01258">
    <property type="entry name" value="pgm_1"/>
    <property type="match status" value="2"/>
</dbReference>
<dbReference type="NCBIfam" id="NF002339">
    <property type="entry name" value="PRK01295.1"/>
    <property type="match status" value="1"/>
</dbReference>
<dbReference type="PANTHER" id="PTHR11931">
    <property type="entry name" value="PHOSPHOGLYCERATE MUTASE"/>
    <property type="match status" value="1"/>
</dbReference>
<dbReference type="Pfam" id="PF00300">
    <property type="entry name" value="His_Phos_1"/>
    <property type="match status" value="1"/>
</dbReference>
<dbReference type="PIRSF" id="PIRSF000709">
    <property type="entry name" value="6PFK_2-Ptase"/>
    <property type="match status" value="1"/>
</dbReference>
<dbReference type="SMART" id="SM00855">
    <property type="entry name" value="PGAM"/>
    <property type="match status" value="1"/>
</dbReference>
<dbReference type="SUPFAM" id="SSF53254">
    <property type="entry name" value="Phosphoglycerate mutase-like"/>
    <property type="match status" value="1"/>
</dbReference>
<dbReference type="PROSITE" id="PS00175">
    <property type="entry name" value="PG_MUTASE"/>
    <property type="match status" value="1"/>
</dbReference>
<proteinExistence type="inferred from homology"/>
<gene>
    <name evidence="1" type="primary">gpmA</name>
    <name type="ordered locus">R00162</name>
    <name type="ORF">SMc02838</name>
</gene>
<evidence type="ECO:0000255" key="1">
    <source>
        <dbReference type="HAMAP-Rule" id="MF_01039"/>
    </source>
</evidence>
<name>GPMA_RHIME</name>
<comment type="function">
    <text evidence="1">Catalyzes the interconversion of 2-phosphoglycerate and 3-phosphoglycerate.</text>
</comment>
<comment type="catalytic activity">
    <reaction evidence="1">
        <text>(2R)-2-phosphoglycerate = (2R)-3-phosphoglycerate</text>
        <dbReference type="Rhea" id="RHEA:15901"/>
        <dbReference type="ChEBI" id="CHEBI:58272"/>
        <dbReference type="ChEBI" id="CHEBI:58289"/>
        <dbReference type="EC" id="5.4.2.11"/>
    </reaction>
</comment>
<comment type="pathway">
    <text evidence="1">Carbohydrate degradation; glycolysis; pyruvate from D-glyceraldehyde 3-phosphate: step 3/5.</text>
</comment>
<comment type="subunit">
    <text evidence="1">Homodimer.</text>
</comment>
<comment type="similarity">
    <text evidence="1">Belongs to the phosphoglycerate mutase family. BPG-dependent PGAM subfamily.</text>
</comment>